<gene>
    <name type="primary">RpS8</name>
</gene>
<reference key="1">
    <citation type="journal article" date="2003" name="Bioinformatics">
        <title>Annotation pattern of ESTs from Spodoptera frugiperda Sf9 cells and analysis of the ribosomal protein genes reveal insect-specific features and unexpectedly low codon usage bias.</title>
        <authorList>
            <person name="Landais I."/>
            <person name="Ogliastro M."/>
            <person name="Mita K."/>
            <person name="Nohata J."/>
            <person name="Lopez-Ferber M."/>
            <person name="Duonor-Cerutti M."/>
            <person name="Shimada T."/>
            <person name="Fournier P."/>
            <person name="Devauchelle G."/>
        </authorList>
    </citation>
    <scope>NUCLEOTIDE SEQUENCE [LARGE SCALE MRNA]</scope>
</reference>
<protein>
    <recommendedName>
        <fullName evidence="3">Small ribosomal subunit protein eS8</fullName>
    </recommendedName>
    <alternativeName>
        <fullName>40S ribosomal protein S8</fullName>
    </alternativeName>
</protein>
<dbReference type="EMBL" id="AY072291">
    <property type="protein sequence ID" value="AAL62472.1"/>
    <property type="molecule type" value="mRNA"/>
</dbReference>
<dbReference type="SMR" id="Q8WQI5"/>
<dbReference type="EnsemblMetazoa" id="XM_035574505.2">
    <property type="protein sequence ID" value="XP_035430398.1"/>
    <property type="gene ID" value="LOC118262865"/>
</dbReference>
<dbReference type="OrthoDB" id="1703270at2759"/>
<dbReference type="Proteomes" id="UP000829999">
    <property type="component" value="Unplaced"/>
</dbReference>
<dbReference type="GO" id="GO:0005737">
    <property type="term" value="C:cytoplasm"/>
    <property type="evidence" value="ECO:0007669"/>
    <property type="project" value="UniProtKB-SubCell"/>
</dbReference>
<dbReference type="GO" id="GO:0016020">
    <property type="term" value="C:membrane"/>
    <property type="evidence" value="ECO:0007669"/>
    <property type="project" value="UniProtKB-SubCell"/>
</dbReference>
<dbReference type="GO" id="GO:0005730">
    <property type="term" value="C:nucleolus"/>
    <property type="evidence" value="ECO:0007669"/>
    <property type="project" value="UniProtKB-SubCell"/>
</dbReference>
<dbReference type="GO" id="GO:0005840">
    <property type="term" value="C:ribosome"/>
    <property type="evidence" value="ECO:0007669"/>
    <property type="project" value="UniProtKB-KW"/>
</dbReference>
<dbReference type="GO" id="GO:0032040">
    <property type="term" value="C:small-subunit processome"/>
    <property type="evidence" value="ECO:0000250"/>
    <property type="project" value="UniProtKB"/>
</dbReference>
<dbReference type="GO" id="GO:0003735">
    <property type="term" value="F:structural constituent of ribosome"/>
    <property type="evidence" value="ECO:0007669"/>
    <property type="project" value="InterPro"/>
</dbReference>
<dbReference type="GO" id="GO:0042274">
    <property type="term" value="P:ribosomal small subunit biogenesis"/>
    <property type="evidence" value="ECO:0000250"/>
    <property type="project" value="UniProtKB"/>
</dbReference>
<dbReference type="GO" id="GO:0006412">
    <property type="term" value="P:translation"/>
    <property type="evidence" value="ECO:0007669"/>
    <property type="project" value="InterPro"/>
</dbReference>
<dbReference type="CDD" id="cd11380">
    <property type="entry name" value="Ribosomal_S8e_like"/>
    <property type="match status" value="1"/>
</dbReference>
<dbReference type="FunFam" id="1.10.168.20:FF:000001">
    <property type="entry name" value="40S ribosomal protein S8"/>
    <property type="match status" value="1"/>
</dbReference>
<dbReference type="FunFam" id="3.10.290.70:FF:000004">
    <property type="entry name" value="40S ribosomal protein S8"/>
    <property type="match status" value="1"/>
</dbReference>
<dbReference type="FunFam" id="3.10.290.70:FF:000005">
    <property type="entry name" value="40S ribosomal protein S8"/>
    <property type="match status" value="1"/>
</dbReference>
<dbReference type="Gene3D" id="3.10.290.70">
    <property type="match status" value="1"/>
</dbReference>
<dbReference type="Gene3D" id="1.10.168.20">
    <property type="entry name" value="Ribosomal protein S8e, subdomain"/>
    <property type="match status" value="1"/>
</dbReference>
<dbReference type="InterPro" id="IPR001047">
    <property type="entry name" value="Ribosomal_eS8"/>
</dbReference>
<dbReference type="InterPro" id="IPR018283">
    <property type="entry name" value="Ribosomal_eS8_CS"/>
</dbReference>
<dbReference type="InterPro" id="IPR042563">
    <property type="entry name" value="Ribosomal_protein_eS8_euk"/>
</dbReference>
<dbReference type="InterPro" id="IPR022309">
    <property type="entry name" value="Ribosomal_Se8/biogenesis_NSA2"/>
</dbReference>
<dbReference type="NCBIfam" id="TIGR00307">
    <property type="entry name" value="eS8"/>
    <property type="match status" value="1"/>
</dbReference>
<dbReference type="PANTHER" id="PTHR10394">
    <property type="entry name" value="40S RIBOSOMAL PROTEIN S8"/>
    <property type="match status" value="1"/>
</dbReference>
<dbReference type="Pfam" id="PF01201">
    <property type="entry name" value="Ribosomal_S8e"/>
    <property type="match status" value="1"/>
</dbReference>
<dbReference type="PROSITE" id="PS01193">
    <property type="entry name" value="RIBOSOMAL_S8E"/>
    <property type="match status" value="1"/>
</dbReference>
<evidence type="ECO:0000250" key="1">
    <source>
        <dbReference type="UniProtKB" id="P62241"/>
    </source>
</evidence>
<evidence type="ECO:0000256" key="2">
    <source>
        <dbReference type="SAM" id="MobiDB-lite"/>
    </source>
</evidence>
<evidence type="ECO:0000305" key="3"/>
<sequence>MGISRDHWHKRRATGGKRAPIRKKRKYELGRPAANTKLGPQRIHLVRSRGGNTKYRALRLDTGNFSWGSECSTRKSRIIDVVYNASNNELVRTKTLVKNAIVVVDATPFRQWYESHYLLPLGRKKGAKLTEAEDAIINKKRSQKTAKKYLARQRLSKVESALEEQFHTGRLLACVASRPGQCGRADGYILEGKELEFYLRKIKSKRAK</sequence>
<name>RS8_SPOFR</name>
<keyword id="KW-0963">Cytoplasm</keyword>
<keyword id="KW-0449">Lipoprotein</keyword>
<keyword id="KW-0472">Membrane</keyword>
<keyword id="KW-0539">Nucleus</keyword>
<keyword id="KW-0687">Ribonucleoprotein</keyword>
<keyword id="KW-0689">Ribosomal protein</keyword>
<comment type="function">
    <text evidence="1">Component of the small ribosomal subunit. The ribosome is a large ribonucleoprotein complex responsible for the synthesis of proteins in the cell. Part of the small subunit (SSU) processome, first precursor of the small eukaryotic ribosomal subunit. During the assembly of the SSU processome in the nucleolus, many ribosome biogenesis factors, an RNA chaperone and ribosomal proteins associate with the nascent pre-rRNA and work in concert to generate RNA folding, modifications, rearrangements and cleavage as well as targeted degradation of pre-ribosomal RNA by the RNA exosome.</text>
</comment>
<comment type="subunit">
    <text evidence="1">Component of the small ribosomal subunit. Identified in a IGF2BP1-dependent mRNP granule complex containing untranslated mRNAs. Part of the small subunit (SSU) processome, composed of more than 70 proteins and the RNA chaperone small nucleolar RNA (snoRNA) U3.</text>
</comment>
<comment type="subcellular location">
    <subcellularLocation>
        <location evidence="1">Cytoplasm</location>
    </subcellularLocation>
    <subcellularLocation>
        <location evidence="1">Membrane</location>
        <topology evidence="1">Lipid-anchor</topology>
    </subcellularLocation>
    <subcellularLocation>
        <location evidence="1">Nucleus</location>
        <location evidence="1">Nucleolus</location>
    </subcellularLocation>
    <text evidence="1">Localized in cytoplasmic mRNP granules containing untranslated mRNAs.</text>
</comment>
<comment type="similarity">
    <text evidence="3">Belongs to the eukaryotic ribosomal protein eS8 family.</text>
</comment>
<accession>Q8WQI5</accession>
<organism>
    <name type="scientific">Spodoptera frugiperda</name>
    <name type="common">Fall armyworm</name>
    <dbReference type="NCBI Taxonomy" id="7108"/>
    <lineage>
        <taxon>Eukaryota</taxon>
        <taxon>Metazoa</taxon>
        <taxon>Ecdysozoa</taxon>
        <taxon>Arthropoda</taxon>
        <taxon>Hexapoda</taxon>
        <taxon>Insecta</taxon>
        <taxon>Pterygota</taxon>
        <taxon>Neoptera</taxon>
        <taxon>Endopterygota</taxon>
        <taxon>Lepidoptera</taxon>
        <taxon>Glossata</taxon>
        <taxon>Ditrysia</taxon>
        <taxon>Noctuoidea</taxon>
        <taxon>Noctuidae</taxon>
        <taxon>Amphipyrinae</taxon>
        <taxon>Spodoptera</taxon>
    </lineage>
</organism>
<proteinExistence type="evidence at transcript level"/>
<feature type="chain" id="PRO_0000122250" description="Small ribosomal subunit protein eS8">
    <location>
        <begin position="1"/>
        <end position="208"/>
    </location>
</feature>
<feature type="region of interest" description="Disordered" evidence="2">
    <location>
        <begin position="1"/>
        <end position="34"/>
    </location>
</feature>
<feature type="compositionally biased region" description="Basic residues" evidence="2">
    <location>
        <begin position="7"/>
        <end position="26"/>
    </location>
</feature>